<name>Y1456_MYCBO</name>
<feature type="chain" id="PRO_0000107729" description="Nucleotide-binding protein Mb1456">
    <location>
        <begin position="1"/>
        <end position="301"/>
    </location>
</feature>
<feature type="binding site" evidence="1">
    <location>
        <begin position="24"/>
        <end position="31"/>
    </location>
    <ligand>
        <name>ATP</name>
        <dbReference type="ChEBI" id="CHEBI:30616"/>
    </ligand>
</feature>
<feature type="binding site" evidence="1">
    <location>
        <begin position="75"/>
        <end position="78"/>
    </location>
    <ligand>
        <name>GTP</name>
        <dbReference type="ChEBI" id="CHEBI:37565"/>
    </ligand>
</feature>
<evidence type="ECO:0000255" key="1">
    <source>
        <dbReference type="HAMAP-Rule" id="MF_00636"/>
    </source>
</evidence>
<gene>
    <name type="ordered locus">BQ2027_MB1456</name>
</gene>
<dbReference type="EMBL" id="LT708304">
    <property type="protein sequence ID" value="SIU00059.1"/>
    <property type="molecule type" value="Genomic_DNA"/>
</dbReference>
<dbReference type="RefSeq" id="NP_855108.1">
    <property type="nucleotide sequence ID" value="NC_002945.3"/>
</dbReference>
<dbReference type="SMR" id="P67107"/>
<dbReference type="KEGG" id="mbo:BQ2027_MB1456"/>
<dbReference type="PATRIC" id="fig|233413.5.peg.1591"/>
<dbReference type="Proteomes" id="UP000001419">
    <property type="component" value="Chromosome"/>
</dbReference>
<dbReference type="GO" id="GO:0005524">
    <property type="term" value="F:ATP binding"/>
    <property type="evidence" value="ECO:0007669"/>
    <property type="project" value="UniProtKB-UniRule"/>
</dbReference>
<dbReference type="GO" id="GO:0005525">
    <property type="term" value="F:GTP binding"/>
    <property type="evidence" value="ECO:0007669"/>
    <property type="project" value="UniProtKB-UniRule"/>
</dbReference>
<dbReference type="HAMAP" id="MF_00636">
    <property type="entry name" value="RapZ_like"/>
    <property type="match status" value="1"/>
</dbReference>
<dbReference type="InterPro" id="IPR027417">
    <property type="entry name" value="P-loop_NTPase"/>
</dbReference>
<dbReference type="InterPro" id="IPR005337">
    <property type="entry name" value="RapZ-like"/>
</dbReference>
<dbReference type="InterPro" id="IPR053930">
    <property type="entry name" value="RapZ-like_N"/>
</dbReference>
<dbReference type="InterPro" id="IPR053931">
    <property type="entry name" value="RapZ_C"/>
</dbReference>
<dbReference type="NCBIfam" id="NF003828">
    <property type="entry name" value="PRK05416.1"/>
    <property type="match status" value="1"/>
</dbReference>
<dbReference type="PANTHER" id="PTHR30448">
    <property type="entry name" value="RNASE ADAPTER PROTEIN RAPZ"/>
    <property type="match status" value="1"/>
</dbReference>
<dbReference type="PANTHER" id="PTHR30448:SF0">
    <property type="entry name" value="RNASE ADAPTER PROTEIN RAPZ"/>
    <property type="match status" value="1"/>
</dbReference>
<dbReference type="Pfam" id="PF22740">
    <property type="entry name" value="PapZ_C"/>
    <property type="match status" value="1"/>
</dbReference>
<dbReference type="Pfam" id="PF03668">
    <property type="entry name" value="RapZ-like_N"/>
    <property type="match status" value="1"/>
</dbReference>
<dbReference type="PIRSF" id="PIRSF005052">
    <property type="entry name" value="P-loopkin"/>
    <property type="match status" value="1"/>
</dbReference>
<dbReference type="SUPFAM" id="SSF52540">
    <property type="entry name" value="P-loop containing nucleoside triphosphate hydrolases"/>
    <property type="match status" value="1"/>
</dbReference>
<sequence>MMNHARGVENRSEGGGIDVVLVTGLSGAGRGTAAKVLEDLGWYVADNLPPQLITRMVDFGLAAGSRITQLAVVMDVRSRGFTGDLDSVRNELATRAITPRVVFMEASDDTLVRRYEQNRRSHPLQGEQTLAEGIAAERRMLAPVRATADLIIDTSTLSVGGLRDSIERAFGGDGGATTSVTVESFGFKYGLPMDADMVMDVRFLPNPHWVDELRPLTGQHPAVRDYVLHRPGAAEFLESYHRLLSLVVDGYRREGKRYMTIAIGCTGGKHRSVAIAEALMGLLRSDQQLSVRALHRDLGRE</sequence>
<proteinExistence type="inferred from homology"/>
<organism>
    <name type="scientific">Mycobacterium bovis (strain ATCC BAA-935 / AF2122/97)</name>
    <dbReference type="NCBI Taxonomy" id="233413"/>
    <lineage>
        <taxon>Bacteria</taxon>
        <taxon>Bacillati</taxon>
        <taxon>Actinomycetota</taxon>
        <taxon>Actinomycetes</taxon>
        <taxon>Mycobacteriales</taxon>
        <taxon>Mycobacteriaceae</taxon>
        <taxon>Mycobacterium</taxon>
        <taxon>Mycobacterium tuberculosis complex</taxon>
    </lineage>
</organism>
<protein>
    <recommendedName>
        <fullName evidence="1">Nucleotide-binding protein Mb1456</fullName>
    </recommendedName>
</protein>
<comment type="function">
    <text evidence="1">Displays ATPase and GTPase activities.</text>
</comment>
<comment type="similarity">
    <text evidence="1">Belongs to the RapZ-like family.</text>
</comment>
<accession>P67107</accession>
<accession>A0A1R3XYA1</accession>
<accession>P71690</accession>
<accession>X2BHV1</accession>
<keyword id="KW-0067">ATP-binding</keyword>
<keyword id="KW-0342">GTP-binding</keyword>
<keyword id="KW-0547">Nucleotide-binding</keyword>
<keyword id="KW-1185">Reference proteome</keyword>
<reference key="1">
    <citation type="journal article" date="2003" name="Proc. Natl. Acad. Sci. U.S.A.">
        <title>The complete genome sequence of Mycobacterium bovis.</title>
        <authorList>
            <person name="Garnier T."/>
            <person name="Eiglmeier K."/>
            <person name="Camus J.-C."/>
            <person name="Medina N."/>
            <person name="Mansoor H."/>
            <person name="Pryor M."/>
            <person name="Duthoy S."/>
            <person name="Grondin S."/>
            <person name="Lacroix C."/>
            <person name="Monsempe C."/>
            <person name="Simon S."/>
            <person name="Harris B."/>
            <person name="Atkin R."/>
            <person name="Doggett J."/>
            <person name="Mayes R."/>
            <person name="Keating L."/>
            <person name="Wheeler P.R."/>
            <person name="Parkhill J."/>
            <person name="Barrell B.G."/>
            <person name="Cole S.T."/>
            <person name="Gordon S.V."/>
            <person name="Hewinson R.G."/>
        </authorList>
    </citation>
    <scope>NUCLEOTIDE SEQUENCE [LARGE SCALE GENOMIC DNA]</scope>
    <source>
        <strain>ATCC BAA-935 / AF2122/97</strain>
    </source>
</reference>
<reference key="2">
    <citation type="journal article" date="2017" name="Genome Announc.">
        <title>Updated reference genome sequence and annotation of Mycobacterium bovis AF2122/97.</title>
        <authorList>
            <person name="Malone K.M."/>
            <person name="Farrell D."/>
            <person name="Stuber T.P."/>
            <person name="Schubert O.T."/>
            <person name="Aebersold R."/>
            <person name="Robbe-Austerman S."/>
            <person name="Gordon S.V."/>
        </authorList>
    </citation>
    <scope>NUCLEOTIDE SEQUENCE [LARGE SCALE GENOMIC DNA]</scope>
    <scope>GENOME REANNOTATION</scope>
    <source>
        <strain>ATCC BAA-935 / AF2122/97</strain>
    </source>
</reference>